<name>SYDND_CORGL</name>
<dbReference type="EC" id="6.1.1.23" evidence="1"/>
<dbReference type="EMBL" id="BA000036">
    <property type="protein sequence ID" value="BAB99028.1"/>
    <property type="molecule type" value="Genomic_DNA"/>
</dbReference>
<dbReference type="EMBL" id="BX927152">
    <property type="protein sequence ID" value="CAF21644.1"/>
    <property type="molecule type" value="Genomic_DNA"/>
</dbReference>
<dbReference type="RefSeq" id="NP_600849.1">
    <property type="nucleotide sequence ID" value="NC_003450.3"/>
</dbReference>
<dbReference type="RefSeq" id="WP_011014498.1">
    <property type="nucleotide sequence ID" value="NC_006958.1"/>
</dbReference>
<dbReference type="SMR" id="Q8NQ19"/>
<dbReference type="STRING" id="196627.cg1841"/>
<dbReference type="GeneID" id="1019604"/>
<dbReference type="KEGG" id="cgb:cg1841"/>
<dbReference type="KEGG" id="cgl:Cgl1635"/>
<dbReference type="PATRIC" id="fig|196627.13.peg.1596"/>
<dbReference type="eggNOG" id="COG0173">
    <property type="taxonomic scope" value="Bacteria"/>
</dbReference>
<dbReference type="HOGENOM" id="CLU_014330_3_2_11"/>
<dbReference type="OrthoDB" id="9802326at2"/>
<dbReference type="BioCyc" id="CORYNE:G18NG-11220-MONOMER"/>
<dbReference type="Proteomes" id="UP000000582">
    <property type="component" value="Chromosome"/>
</dbReference>
<dbReference type="Proteomes" id="UP000001009">
    <property type="component" value="Chromosome"/>
</dbReference>
<dbReference type="GO" id="GO:0005737">
    <property type="term" value="C:cytoplasm"/>
    <property type="evidence" value="ECO:0007669"/>
    <property type="project" value="UniProtKB-SubCell"/>
</dbReference>
<dbReference type="GO" id="GO:0004815">
    <property type="term" value="F:aspartate-tRNA ligase activity"/>
    <property type="evidence" value="ECO:0007669"/>
    <property type="project" value="UniProtKB-UniRule"/>
</dbReference>
<dbReference type="GO" id="GO:0050560">
    <property type="term" value="F:aspartate-tRNA(Asn) ligase activity"/>
    <property type="evidence" value="ECO:0007669"/>
    <property type="project" value="UniProtKB-EC"/>
</dbReference>
<dbReference type="GO" id="GO:0005524">
    <property type="term" value="F:ATP binding"/>
    <property type="evidence" value="ECO:0007669"/>
    <property type="project" value="UniProtKB-UniRule"/>
</dbReference>
<dbReference type="GO" id="GO:0003676">
    <property type="term" value="F:nucleic acid binding"/>
    <property type="evidence" value="ECO:0007669"/>
    <property type="project" value="InterPro"/>
</dbReference>
<dbReference type="GO" id="GO:0006422">
    <property type="term" value="P:aspartyl-tRNA aminoacylation"/>
    <property type="evidence" value="ECO:0007669"/>
    <property type="project" value="UniProtKB-UniRule"/>
</dbReference>
<dbReference type="CDD" id="cd00777">
    <property type="entry name" value="AspRS_core"/>
    <property type="match status" value="1"/>
</dbReference>
<dbReference type="CDD" id="cd04317">
    <property type="entry name" value="EcAspRS_like_N"/>
    <property type="match status" value="1"/>
</dbReference>
<dbReference type="Gene3D" id="3.30.930.10">
    <property type="entry name" value="Bira Bifunctional Protein, Domain 2"/>
    <property type="match status" value="1"/>
</dbReference>
<dbReference type="Gene3D" id="3.30.1360.30">
    <property type="entry name" value="GAD-like domain"/>
    <property type="match status" value="1"/>
</dbReference>
<dbReference type="Gene3D" id="2.40.50.140">
    <property type="entry name" value="Nucleic acid-binding proteins"/>
    <property type="match status" value="1"/>
</dbReference>
<dbReference type="HAMAP" id="MF_00044">
    <property type="entry name" value="Asp_tRNA_synth_type1"/>
    <property type="match status" value="1"/>
</dbReference>
<dbReference type="InterPro" id="IPR004364">
    <property type="entry name" value="Aa-tRNA-synt_II"/>
</dbReference>
<dbReference type="InterPro" id="IPR006195">
    <property type="entry name" value="aa-tRNA-synth_II"/>
</dbReference>
<dbReference type="InterPro" id="IPR045864">
    <property type="entry name" value="aa-tRNA-synth_II/BPL/LPL"/>
</dbReference>
<dbReference type="InterPro" id="IPR004524">
    <property type="entry name" value="Asp-tRNA-ligase_1"/>
</dbReference>
<dbReference type="InterPro" id="IPR047089">
    <property type="entry name" value="Asp-tRNA-ligase_1_N"/>
</dbReference>
<dbReference type="InterPro" id="IPR002312">
    <property type="entry name" value="Asp/Asn-tRNA-synth_IIb"/>
</dbReference>
<dbReference type="InterPro" id="IPR047090">
    <property type="entry name" value="AspRS_core"/>
</dbReference>
<dbReference type="InterPro" id="IPR004115">
    <property type="entry name" value="GAD-like_sf"/>
</dbReference>
<dbReference type="InterPro" id="IPR029351">
    <property type="entry name" value="GAD_dom"/>
</dbReference>
<dbReference type="InterPro" id="IPR012340">
    <property type="entry name" value="NA-bd_OB-fold"/>
</dbReference>
<dbReference type="InterPro" id="IPR004365">
    <property type="entry name" value="NA-bd_OB_tRNA"/>
</dbReference>
<dbReference type="NCBIfam" id="TIGR00459">
    <property type="entry name" value="aspS_bact"/>
    <property type="match status" value="1"/>
</dbReference>
<dbReference type="NCBIfam" id="NF001750">
    <property type="entry name" value="PRK00476.1"/>
    <property type="match status" value="1"/>
</dbReference>
<dbReference type="PANTHER" id="PTHR22594:SF5">
    <property type="entry name" value="ASPARTATE--TRNA LIGASE, MITOCHONDRIAL"/>
    <property type="match status" value="1"/>
</dbReference>
<dbReference type="PANTHER" id="PTHR22594">
    <property type="entry name" value="ASPARTYL/LYSYL-TRNA SYNTHETASE"/>
    <property type="match status" value="1"/>
</dbReference>
<dbReference type="Pfam" id="PF02938">
    <property type="entry name" value="GAD"/>
    <property type="match status" value="1"/>
</dbReference>
<dbReference type="Pfam" id="PF00152">
    <property type="entry name" value="tRNA-synt_2"/>
    <property type="match status" value="1"/>
</dbReference>
<dbReference type="Pfam" id="PF01336">
    <property type="entry name" value="tRNA_anti-codon"/>
    <property type="match status" value="1"/>
</dbReference>
<dbReference type="PRINTS" id="PR01042">
    <property type="entry name" value="TRNASYNTHASP"/>
</dbReference>
<dbReference type="SUPFAM" id="SSF55681">
    <property type="entry name" value="Class II aaRS and biotin synthetases"/>
    <property type="match status" value="1"/>
</dbReference>
<dbReference type="SUPFAM" id="SSF55261">
    <property type="entry name" value="GAD domain-like"/>
    <property type="match status" value="1"/>
</dbReference>
<dbReference type="SUPFAM" id="SSF50249">
    <property type="entry name" value="Nucleic acid-binding proteins"/>
    <property type="match status" value="1"/>
</dbReference>
<dbReference type="PROSITE" id="PS50862">
    <property type="entry name" value="AA_TRNA_LIGASE_II"/>
    <property type="match status" value="1"/>
</dbReference>
<gene>
    <name evidence="1" type="primary">aspS</name>
    <name type="ordered locus">Cgl1635</name>
    <name type="ordered locus">cg1841</name>
</gene>
<keyword id="KW-0030">Aminoacyl-tRNA synthetase</keyword>
<keyword id="KW-0067">ATP-binding</keyword>
<keyword id="KW-0963">Cytoplasm</keyword>
<keyword id="KW-0436">Ligase</keyword>
<keyword id="KW-0547">Nucleotide-binding</keyword>
<keyword id="KW-0648">Protein biosynthesis</keyword>
<keyword id="KW-1185">Reference proteome</keyword>
<reference key="1">
    <citation type="journal article" date="2003" name="Appl. Microbiol. Biotechnol.">
        <title>The Corynebacterium glutamicum genome: features and impacts on biotechnological processes.</title>
        <authorList>
            <person name="Ikeda M."/>
            <person name="Nakagawa S."/>
        </authorList>
    </citation>
    <scope>NUCLEOTIDE SEQUENCE [LARGE SCALE GENOMIC DNA]</scope>
    <source>
        <strain>ATCC 13032 / DSM 20300 / JCM 1318 / BCRC 11384 / CCUG 27702 / LMG 3730 / NBRC 12168 / NCIMB 10025 / NRRL B-2784 / 534</strain>
    </source>
</reference>
<reference key="2">
    <citation type="journal article" date="2003" name="J. Biotechnol.">
        <title>The complete Corynebacterium glutamicum ATCC 13032 genome sequence and its impact on the production of L-aspartate-derived amino acids and vitamins.</title>
        <authorList>
            <person name="Kalinowski J."/>
            <person name="Bathe B."/>
            <person name="Bartels D."/>
            <person name="Bischoff N."/>
            <person name="Bott M."/>
            <person name="Burkovski A."/>
            <person name="Dusch N."/>
            <person name="Eggeling L."/>
            <person name="Eikmanns B.J."/>
            <person name="Gaigalat L."/>
            <person name="Goesmann A."/>
            <person name="Hartmann M."/>
            <person name="Huthmacher K."/>
            <person name="Kraemer R."/>
            <person name="Linke B."/>
            <person name="McHardy A.C."/>
            <person name="Meyer F."/>
            <person name="Moeckel B."/>
            <person name="Pfefferle W."/>
            <person name="Puehler A."/>
            <person name="Rey D.A."/>
            <person name="Rueckert C."/>
            <person name="Rupp O."/>
            <person name="Sahm H."/>
            <person name="Wendisch V.F."/>
            <person name="Wiegraebe I."/>
            <person name="Tauch A."/>
        </authorList>
    </citation>
    <scope>NUCLEOTIDE SEQUENCE [LARGE SCALE GENOMIC DNA]</scope>
    <source>
        <strain>ATCC 13032 / DSM 20300 / JCM 1318 / BCRC 11384 / CCUG 27702 / LMG 3730 / NBRC 12168 / NCIMB 10025 / NRRL B-2784 / 534</strain>
    </source>
</reference>
<accession>Q8NQ19</accession>
<feature type="chain" id="PRO_0000110863" description="Aspartate--tRNA(Asp/Asn) ligase">
    <location>
        <begin position="1"/>
        <end position="608"/>
    </location>
</feature>
<feature type="region of interest" description="Aspartate" evidence="1">
    <location>
        <begin position="199"/>
        <end position="202"/>
    </location>
</feature>
<feature type="region of interest" description="Disordered" evidence="2">
    <location>
        <begin position="566"/>
        <end position="608"/>
    </location>
</feature>
<feature type="compositionally biased region" description="Basic and acidic residues" evidence="2">
    <location>
        <begin position="580"/>
        <end position="596"/>
    </location>
</feature>
<feature type="binding site" evidence="1">
    <location>
        <position position="175"/>
    </location>
    <ligand>
        <name>L-aspartate</name>
        <dbReference type="ChEBI" id="CHEBI:29991"/>
    </ligand>
</feature>
<feature type="binding site" evidence="1">
    <location>
        <begin position="221"/>
        <end position="223"/>
    </location>
    <ligand>
        <name>ATP</name>
        <dbReference type="ChEBI" id="CHEBI:30616"/>
    </ligand>
</feature>
<feature type="binding site" evidence="1">
    <location>
        <position position="221"/>
    </location>
    <ligand>
        <name>L-aspartate</name>
        <dbReference type="ChEBI" id="CHEBI:29991"/>
    </ligand>
</feature>
<feature type="binding site" evidence="1">
    <location>
        <position position="230"/>
    </location>
    <ligand>
        <name>ATP</name>
        <dbReference type="ChEBI" id="CHEBI:30616"/>
    </ligand>
</feature>
<feature type="binding site" evidence="1">
    <location>
        <position position="453"/>
    </location>
    <ligand>
        <name>L-aspartate</name>
        <dbReference type="ChEBI" id="CHEBI:29991"/>
    </ligand>
</feature>
<feature type="binding site" evidence="1">
    <location>
        <position position="487"/>
    </location>
    <ligand>
        <name>ATP</name>
        <dbReference type="ChEBI" id="CHEBI:30616"/>
    </ligand>
</feature>
<feature type="binding site" evidence="1">
    <location>
        <position position="494"/>
    </location>
    <ligand>
        <name>L-aspartate</name>
        <dbReference type="ChEBI" id="CHEBI:29991"/>
    </ligand>
</feature>
<feature type="binding site" evidence="1">
    <location>
        <begin position="539"/>
        <end position="542"/>
    </location>
    <ligand>
        <name>ATP</name>
        <dbReference type="ChEBI" id="CHEBI:30616"/>
    </ligand>
</feature>
<feature type="site" description="Important for tRNA non-discrimination" evidence="1">
    <location>
        <position position="31"/>
    </location>
</feature>
<feature type="site" description="Important for tRNA non-discrimination" evidence="1">
    <location>
        <position position="80"/>
    </location>
</feature>
<protein>
    <recommendedName>
        <fullName evidence="1">Aspartate--tRNA(Asp/Asn) ligase</fullName>
        <ecNumber evidence="1">6.1.1.23</ecNumber>
    </recommendedName>
    <alternativeName>
        <fullName evidence="1">Aspartyl-tRNA synthetase</fullName>
        <shortName evidence="1">AspRS</shortName>
    </alternativeName>
    <alternativeName>
        <fullName evidence="1">Non-discriminating aspartyl-tRNA synthetase</fullName>
        <shortName evidence="1">ND-AspRS</shortName>
    </alternativeName>
</protein>
<sequence length="608" mass="67010">MLRTHLSGELRKENAGQSVTLTGWVNRRRDHGGVIFIDLRDRTGIAQVVFRNEDVAERAHALRSEFVLRVTGVVEERPEGSQNPNLASGDIEVSVTEFEVLNESAPLPFQIEDSSSAGEVGEETRLKYRYLDLRRPVQANALRLRSAANKAARTVLDSHDFTEIETPTLTRSTPEGARDFLVPARLRPGTFYALPQSPQLFKQLLQVAGMERYYQIARCYRDEDFRADRQPEFTQLDVEMSFVDQDDVIALGEEIISEVWKLIGYEIKTPIPRMTYADAMRRYGSDKPDLRFDIEITECTEFFQDTTFRVFKNEYVGAVVMTGGASQPRRQLDAWQEWAKQRGAKGLAYILVGEDGELSGPVAKNITDAERAGIAAHVGAQPGDCIFFAAGDTKSSLALLGAARGEIAKKLDLIKEGDWAFTWIVDAPMFEPAADATASGDVALGNSKWTAVHHAFTSPKPEFLDNFDTNPGDALAYAYDIVCNGNEIGGGSIRIHQRDVQERVFEVMGITGEEAREKFGFLLDAFAFGAPPHGGIAFGWDRIVSLLGGFDSIRDVIAFPKSGGGIDPLTDAPAAITPQQRKEAGIDAKPKPKAEAQAEAQAEESAEK</sequence>
<evidence type="ECO:0000255" key="1">
    <source>
        <dbReference type="HAMAP-Rule" id="MF_00044"/>
    </source>
</evidence>
<evidence type="ECO:0000256" key="2">
    <source>
        <dbReference type="SAM" id="MobiDB-lite"/>
    </source>
</evidence>
<proteinExistence type="inferred from homology"/>
<organism>
    <name type="scientific">Corynebacterium glutamicum (strain ATCC 13032 / DSM 20300 / JCM 1318 / BCRC 11384 / CCUG 27702 / LMG 3730 / NBRC 12168 / NCIMB 10025 / NRRL B-2784 / 534)</name>
    <dbReference type="NCBI Taxonomy" id="196627"/>
    <lineage>
        <taxon>Bacteria</taxon>
        <taxon>Bacillati</taxon>
        <taxon>Actinomycetota</taxon>
        <taxon>Actinomycetes</taxon>
        <taxon>Mycobacteriales</taxon>
        <taxon>Corynebacteriaceae</taxon>
        <taxon>Corynebacterium</taxon>
    </lineage>
</organism>
<comment type="function">
    <text evidence="1">Aspartyl-tRNA synthetase with relaxed tRNA specificity since it is able to aspartylate not only its cognate tRNA(Asp) but also tRNA(Asn). Reaction proceeds in two steps: L-aspartate is first activated by ATP to form Asp-AMP and then transferred to the acceptor end of tRNA(Asp/Asn).</text>
</comment>
<comment type="catalytic activity">
    <reaction evidence="1">
        <text>tRNA(Asx) + L-aspartate + ATP = L-aspartyl-tRNA(Asx) + AMP + diphosphate</text>
        <dbReference type="Rhea" id="RHEA:18349"/>
        <dbReference type="Rhea" id="RHEA-COMP:9710"/>
        <dbReference type="Rhea" id="RHEA-COMP:9711"/>
        <dbReference type="ChEBI" id="CHEBI:29991"/>
        <dbReference type="ChEBI" id="CHEBI:30616"/>
        <dbReference type="ChEBI" id="CHEBI:33019"/>
        <dbReference type="ChEBI" id="CHEBI:78442"/>
        <dbReference type="ChEBI" id="CHEBI:78516"/>
        <dbReference type="ChEBI" id="CHEBI:456215"/>
        <dbReference type="EC" id="6.1.1.23"/>
    </reaction>
</comment>
<comment type="subunit">
    <text evidence="1">Homodimer.</text>
</comment>
<comment type="subcellular location">
    <subcellularLocation>
        <location evidence="1">Cytoplasm</location>
    </subcellularLocation>
</comment>
<comment type="similarity">
    <text evidence="1">Belongs to the class-II aminoacyl-tRNA synthetase family. Type 1 subfamily.</text>
</comment>